<comment type="function">
    <text evidence="1">May play a role in DNA repair. It seems to be involved in an RecBC-independent recombinational process of DNA repair. It may act with RecF and RecO.</text>
</comment>
<comment type="similarity">
    <text evidence="1">Belongs to the RecR family.</text>
</comment>
<accession>A8GS42</accession>
<organism>
    <name type="scientific">Rickettsia rickettsii (strain Sheila Smith)</name>
    <dbReference type="NCBI Taxonomy" id="392021"/>
    <lineage>
        <taxon>Bacteria</taxon>
        <taxon>Pseudomonadati</taxon>
        <taxon>Pseudomonadota</taxon>
        <taxon>Alphaproteobacteria</taxon>
        <taxon>Rickettsiales</taxon>
        <taxon>Rickettsiaceae</taxon>
        <taxon>Rickettsieae</taxon>
        <taxon>Rickettsia</taxon>
        <taxon>spotted fever group</taxon>
    </lineage>
</organism>
<gene>
    <name evidence="1" type="primary">recR</name>
    <name type="ordered locus">A1G_03430</name>
</gene>
<protein>
    <recommendedName>
        <fullName evidence="1">Recombination protein RecR</fullName>
    </recommendedName>
</protein>
<reference key="1">
    <citation type="submission" date="2007-09" db="EMBL/GenBank/DDBJ databases">
        <title>Complete genome sequence of Rickettsia rickettsii.</title>
        <authorList>
            <person name="Madan A."/>
            <person name="Fahey J."/>
            <person name="Helton E."/>
            <person name="Ketteman M."/>
            <person name="Madan A."/>
            <person name="Rodrigues S."/>
            <person name="Sanchez A."/>
            <person name="Dasch G."/>
            <person name="Eremeeva M."/>
        </authorList>
    </citation>
    <scope>NUCLEOTIDE SEQUENCE [LARGE SCALE GENOMIC DNA]</scope>
    <source>
        <strain>Sheila Smith</strain>
    </source>
</reference>
<evidence type="ECO:0000255" key="1">
    <source>
        <dbReference type="HAMAP-Rule" id="MF_00017"/>
    </source>
</evidence>
<proteinExistence type="inferred from homology"/>
<keyword id="KW-0227">DNA damage</keyword>
<keyword id="KW-0233">DNA recombination</keyword>
<keyword id="KW-0234">DNA repair</keyword>
<keyword id="KW-0479">Metal-binding</keyword>
<keyword id="KW-0862">Zinc</keyword>
<keyword id="KW-0863">Zinc-finger</keyword>
<sequence>MNETNYNDIDQLIYLFSKLPGLGIRSARRIALYLLQDKDVRLKSLINNLVEIDKKIVKCEICGNMDTENICRICSSEYRDKSIIAIVETVAELWAMERSGNFKGLYHVLGHNLSAASRQNPSILRLPELLTRCFAENIKEVIIATNSTLEGQTTAYFITEYLKEHPAKISRLASGIPIGGELDYLDEGTVSAAINLRQPFE</sequence>
<feature type="chain" id="PRO_1000001598" description="Recombination protein RecR">
    <location>
        <begin position="1"/>
        <end position="201"/>
    </location>
</feature>
<feature type="domain" description="Toprim" evidence="1">
    <location>
        <begin position="82"/>
        <end position="177"/>
    </location>
</feature>
<feature type="zinc finger region" description="C4-type" evidence="1">
    <location>
        <begin position="59"/>
        <end position="74"/>
    </location>
</feature>
<dbReference type="EMBL" id="CP000848">
    <property type="protein sequence ID" value="ABV76217.1"/>
    <property type="molecule type" value="Genomic_DNA"/>
</dbReference>
<dbReference type="RefSeq" id="WP_012150801.1">
    <property type="nucleotide sequence ID" value="NZ_CP121767.1"/>
</dbReference>
<dbReference type="SMR" id="A8GS42"/>
<dbReference type="GeneID" id="79937353"/>
<dbReference type="KEGG" id="rri:A1G_03430"/>
<dbReference type="HOGENOM" id="CLU_060739_1_1_5"/>
<dbReference type="Proteomes" id="UP000006832">
    <property type="component" value="Chromosome"/>
</dbReference>
<dbReference type="GO" id="GO:0003677">
    <property type="term" value="F:DNA binding"/>
    <property type="evidence" value="ECO:0007669"/>
    <property type="project" value="UniProtKB-UniRule"/>
</dbReference>
<dbReference type="GO" id="GO:0008270">
    <property type="term" value="F:zinc ion binding"/>
    <property type="evidence" value="ECO:0007669"/>
    <property type="project" value="UniProtKB-KW"/>
</dbReference>
<dbReference type="GO" id="GO:0006310">
    <property type="term" value="P:DNA recombination"/>
    <property type="evidence" value="ECO:0007669"/>
    <property type="project" value="UniProtKB-UniRule"/>
</dbReference>
<dbReference type="GO" id="GO:0006281">
    <property type="term" value="P:DNA repair"/>
    <property type="evidence" value="ECO:0007669"/>
    <property type="project" value="UniProtKB-UniRule"/>
</dbReference>
<dbReference type="CDD" id="cd01025">
    <property type="entry name" value="TOPRIM_recR"/>
    <property type="match status" value="1"/>
</dbReference>
<dbReference type="Gene3D" id="3.40.1360.10">
    <property type="match status" value="1"/>
</dbReference>
<dbReference type="Gene3D" id="1.10.8.420">
    <property type="entry name" value="RecR Domain 1"/>
    <property type="match status" value="1"/>
</dbReference>
<dbReference type="HAMAP" id="MF_00017">
    <property type="entry name" value="RecR"/>
    <property type="match status" value="1"/>
</dbReference>
<dbReference type="InterPro" id="IPR000093">
    <property type="entry name" value="DNA_Rcmb_RecR"/>
</dbReference>
<dbReference type="InterPro" id="IPR023627">
    <property type="entry name" value="Rcmb_RecR"/>
</dbReference>
<dbReference type="InterPro" id="IPR015967">
    <property type="entry name" value="Rcmb_RecR_Znf"/>
</dbReference>
<dbReference type="InterPro" id="IPR006171">
    <property type="entry name" value="TOPRIM_dom"/>
</dbReference>
<dbReference type="InterPro" id="IPR034137">
    <property type="entry name" value="TOPRIM_RecR"/>
</dbReference>
<dbReference type="NCBIfam" id="TIGR00615">
    <property type="entry name" value="recR"/>
    <property type="match status" value="1"/>
</dbReference>
<dbReference type="PANTHER" id="PTHR30446">
    <property type="entry name" value="RECOMBINATION PROTEIN RECR"/>
    <property type="match status" value="1"/>
</dbReference>
<dbReference type="PANTHER" id="PTHR30446:SF0">
    <property type="entry name" value="RECOMBINATION PROTEIN RECR"/>
    <property type="match status" value="1"/>
</dbReference>
<dbReference type="Pfam" id="PF21175">
    <property type="entry name" value="RecR_C"/>
    <property type="match status" value="1"/>
</dbReference>
<dbReference type="Pfam" id="PF21176">
    <property type="entry name" value="RecR_HhH"/>
    <property type="match status" value="1"/>
</dbReference>
<dbReference type="Pfam" id="PF02132">
    <property type="entry name" value="RecR_ZnF"/>
    <property type="match status" value="1"/>
</dbReference>
<dbReference type="Pfam" id="PF13662">
    <property type="entry name" value="Toprim_4"/>
    <property type="match status" value="1"/>
</dbReference>
<dbReference type="SMART" id="SM00493">
    <property type="entry name" value="TOPRIM"/>
    <property type="match status" value="1"/>
</dbReference>
<dbReference type="SUPFAM" id="SSF111304">
    <property type="entry name" value="Recombination protein RecR"/>
    <property type="match status" value="1"/>
</dbReference>
<dbReference type="PROSITE" id="PS01300">
    <property type="entry name" value="RECR"/>
    <property type="match status" value="1"/>
</dbReference>
<dbReference type="PROSITE" id="PS50880">
    <property type="entry name" value="TOPRIM"/>
    <property type="match status" value="1"/>
</dbReference>
<name>RECR_RICRS</name>